<feature type="chain" id="PRO_1000054040" description="Uridylate kinase">
    <location>
        <begin position="1"/>
        <end position="245"/>
    </location>
</feature>
<feature type="region of interest" description="Involved in allosteric activation by GTP" evidence="1">
    <location>
        <begin position="20"/>
        <end position="25"/>
    </location>
</feature>
<feature type="binding site" evidence="1">
    <location>
        <begin position="12"/>
        <end position="15"/>
    </location>
    <ligand>
        <name>ATP</name>
        <dbReference type="ChEBI" id="CHEBI:30616"/>
    </ligand>
</feature>
<feature type="binding site" evidence="1">
    <location>
        <position position="54"/>
    </location>
    <ligand>
        <name>UMP</name>
        <dbReference type="ChEBI" id="CHEBI:57865"/>
    </ligand>
</feature>
<feature type="binding site" evidence="1">
    <location>
        <position position="55"/>
    </location>
    <ligand>
        <name>ATP</name>
        <dbReference type="ChEBI" id="CHEBI:30616"/>
    </ligand>
</feature>
<feature type="binding site" evidence="1">
    <location>
        <position position="59"/>
    </location>
    <ligand>
        <name>ATP</name>
        <dbReference type="ChEBI" id="CHEBI:30616"/>
    </ligand>
</feature>
<feature type="binding site" evidence="1">
    <location>
        <position position="74"/>
    </location>
    <ligand>
        <name>UMP</name>
        <dbReference type="ChEBI" id="CHEBI:57865"/>
    </ligand>
</feature>
<feature type="binding site" evidence="1">
    <location>
        <begin position="135"/>
        <end position="142"/>
    </location>
    <ligand>
        <name>UMP</name>
        <dbReference type="ChEBI" id="CHEBI:57865"/>
    </ligand>
</feature>
<feature type="binding site" evidence="1">
    <location>
        <position position="163"/>
    </location>
    <ligand>
        <name>ATP</name>
        <dbReference type="ChEBI" id="CHEBI:30616"/>
    </ligand>
</feature>
<feature type="binding site" evidence="1">
    <location>
        <position position="169"/>
    </location>
    <ligand>
        <name>ATP</name>
        <dbReference type="ChEBI" id="CHEBI:30616"/>
    </ligand>
</feature>
<feature type="binding site" evidence="1">
    <location>
        <position position="172"/>
    </location>
    <ligand>
        <name>ATP</name>
        <dbReference type="ChEBI" id="CHEBI:30616"/>
    </ligand>
</feature>
<comment type="function">
    <text evidence="1">Catalyzes the reversible phosphorylation of UMP to UDP.</text>
</comment>
<comment type="catalytic activity">
    <reaction evidence="1">
        <text>UMP + ATP = UDP + ADP</text>
        <dbReference type="Rhea" id="RHEA:24400"/>
        <dbReference type="ChEBI" id="CHEBI:30616"/>
        <dbReference type="ChEBI" id="CHEBI:57865"/>
        <dbReference type="ChEBI" id="CHEBI:58223"/>
        <dbReference type="ChEBI" id="CHEBI:456216"/>
        <dbReference type="EC" id="2.7.4.22"/>
    </reaction>
</comment>
<comment type="activity regulation">
    <text evidence="1">Allosterically activated by GTP. Inhibited by UTP.</text>
</comment>
<comment type="pathway">
    <text evidence="1">Pyrimidine metabolism; CTP biosynthesis via de novo pathway; UDP from UMP (UMPK route): step 1/1.</text>
</comment>
<comment type="subunit">
    <text evidence="1">Homohexamer.</text>
</comment>
<comment type="subcellular location">
    <subcellularLocation>
        <location evidence="1">Cytoplasm</location>
    </subcellularLocation>
</comment>
<comment type="similarity">
    <text evidence="1">Belongs to the UMP kinase family.</text>
</comment>
<protein>
    <recommendedName>
        <fullName evidence="1">Uridylate kinase</fullName>
        <shortName evidence="1">UK</shortName>
        <ecNumber evidence="1">2.7.4.22</ecNumber>
    </recommendedName>
    <alternativeName>
        <fullName evidence="1">Uridine monophosphate kinase</fullName>
        <shortName evidence="1">UMP kinase</shortName>
        <shortName evidence="1">UMPK</shortName>
    </alternativeName>
</protein>
<organism>
    <name type="scientific">Streptococcus thermophilus (strain ATCC BAA-491 / LMD-9)</name>
    <dbReference type="NCBI Taxonomy" id="322159"/>
    <lineage>
        <taxon>Bacteria</taxon>
        <taxon>Bacillati</taxon>
        <taxon>Bacillota</taxon>
        <taxon>Bacilli</taxon>
        <taxon>Lactobacillales</taxon>
        <taxon>Streptococcaceae</taxon>
        <taxon>Streptococcus</taxon>
    </lineage>
</organism>
<gene>
    <name evidence="1" type="primary">pyrH</name>
    <name type="ordered locus">STER_0474</name>
</gene>
<proteinExistence type="inferred from homology"/>
<sequence>MAEPKYKRVLIKLSGEALAGEKGVGIDLPTVQAIAKEIAEVADSGIQIALVIGGGNLWRGEPAAEAGMDRVQADYTGMLGTTMNALVMADSLKQLGVDTRVQTAIDMKSVAEPYIRGRALRHFEKGRIVIFAAGIGSPYFSTDTTAALRAAEIESDAILMAKNGVDGVYNDDPRKNADAVKFDKLTHVEVIKRGLKIMDATASTLSMDNDIDLVVFNMNEPGNIKRVIFGEQIGTTVSNKAELRK</sequence>
<accession>Q03M16</accession>
<keyword id="KW-0021">Allosteric enzyme</keyword>
<keyword id="KW-0067">ATP-binding</keyword>
<keyword id="KW-0963">Cytoplasm</keyword>
<keyword id="KW-0418">Kinase</keyword>
<keyword id="KW-0547">Nucleotide-binding</keyword>
<keyword id="KW-0665">Pyrimidine biosynthesis</keyword>
<keyword id="KW-0808">Transferase</keyword>
<reference key="1">
    <citation type="journal article" date="2006" name="Proc. Natl. Acad. Sci. U.S.A.">
        <title>Comparative genomics of the lactic acid bacteria.</title>
        <authorList>
            <person name="Makarova K.S."/>
            <person name="Slesarev A."/>
            <person name="Wolf Y.I."/>
            <person name="Sorokin A."/>
            <person name="Mirkin B."/>
            <person name="Koonin E.V."/>
            <person name="Pavlov A."/>
            <person name="Pavlova N."/>
            <person name="Karamychev V."/>
            <person name="Polouchine N."/>
            <person name="Shakhova V."/>
            <person name="Grigoriev I."/>
            <person name="Lou Y."/>
            <person name="Rohksar D."/>
            <person name="Lucas S."/>
            <person name="Huang K."/>
            <person name="Goodstein D.M."/>
            <person name="Hawkins T."/>
            <person name="Plengvidhya V."/>
            <person name="Welker D."/>
            <person name="Hughes J."/>
            <person name="Goh Y."/>
            <person name="Benson A."/>
            <person name="Baldwin K."/>
            <person name="Lee J.-H."/>
            <person name="Diaz-Muniz I."/>
            <person name="Dosti B."/>
            <person name="Smeianov V."/>
            <person name="Wechter W."/>
            <person name="Barabote R."/>
            <person name="Lorca G."/>
            <person name="Altermann E."/>
            <person name="Barrangou R."/>
            <person name="Ganesan B."/>
            <person name="Xie Y."/>
            <person name="Rawsthorne H."/>
            <person name="Tamir D."/>
            <person name="Parker C."/>
            <person name="Breidt F."/>
            <person name="Broadbent J.R."/>
            <person name="Hutkins R."/>
            <person name="O'Sullivan D."/>
            <person name="Steele J."/>
            <person name="Unlu G."/>
            <person name="Saier M.H. Jr."/>
            <person name="Klaenhammer T."/>
            <person name="Richardson P."/>
            <person name="Kozyavkin S."/>
            <person name="Weimer B.C."/>
            <person name="Mills D.A."/>
        </authorList>
    </citation>
    <scope>NUCLEOTIDE SEQUENCE [LARGE SCALE GENOMIC DNA]</scope>
    <source>
        <strain>ATCC BAA-491 / LMD-9</strain>
    </source>
</reference>
<name>PYRH_STRTD</name>
<dbReference type="EC" id="2.7.4.22" evidence="1"/>
<dbReference type="EMBL" id="CP000419">
    <property type="protein sequence ID" value="ABJ65756.1"/>
    <property type="molecule type" value="Genomic_DNA"/>
</dbReference>
<dbReference type="RefSeq" id="WP_002949867.1">
    <property type="nucleotide sequence ID" value="NZ_CP086001.1"/>
</dbReference>
<dbReference type="SMR" id="Q03M16"/>
<dbReference type="GeneID" id="66898352"/>
<dbReference type="KEGG" id="ste:STER_0474"/>
<dbReference type="HOGENOM" id="CLU_033861_0_0_9"/>
<dbReference type="UniPathway" id="UPA00159">
    <property type="reaction ID" value="UER00275"/>
</dbReference>
<dbReference type="GO" id="GO:0005737">
    <property type="term" value="C:cytoplasm"/>
    <property type="evidence" value="ECO:0007669"/>
    <property type="project" value="UniProtKB-SubCell"/>
</dbReference>
<dbReference type="GO" id="GO:0005524">
    <property type="term" value="F:ATP binding"/>
    <property type="evidence" value="ECO:0007669"/>
    <property type="project" value="UniProtKB-KW"/>
</dbReference>
<dbReference type="GO" id="GO:0033862">
    <property type="term" value="F:UMP kinase activity"/>
    <property type="evidence" value="ECO:0007669"/>
    <property type="project" value="UniProtKB-EC"/>
</dbReference>
<dbReference type="GO" id="GO:0044210">
    <property type="term" value="P:'de novo' CTP biosynthetic process"/>
    <property type="evidence" value="ECO:0007669"/>
    <property type="project" value="UniProtKB-UniRule"/>
</dbReference>
<dbReference type="GO" id="GO:0006225">
    <property type="term" value="P:UDP biosynthetic process"/>
    <property type="evidence" value="ECO:0007669"/>
    <property type="project" value="TreeGrafter"/>
</dbReference>
<dbReference type="CDD" id="cd04254">
    <property type="entry name" value="AAK_UMPK-PyrH-Ec"/>
    <property type="match status" value="1"/>
</dbReference>
<dbReference type="FunFam" id="3.40.1160.10:FF:000019">
    <property type="entry name" value="Uridylate kinase"/>
    <property type="match status" value="1"/>
</dbReference>
<dbReference type="Gene3D" id="3.40.1160.10">
    <property type="entry name" value="Acetylglutamate kinase-like"/>
    <property type="match status" value="1"/>
</dbReference>
<dbReference type="HAMAP" id="MF_01220_B">
    <property type="entry name" value="PyrH_B"/>
    <property type="match status" value="1"/>
</dbReference>
<dbReference type="InterPro" id="IPR036393">
    <property type="entry name" value="AceGlu_kinase-like_sf"/>
</dbReference>
<dbReference type="InterPro" id="IPR001048">
    <property type="entry name" value="Asp/Glu/Uridylate_kinase"/>
</dbReference>
<dbReference type="InterPro" id="IPR011817">
    <property type="entry name" value="Uridylate_kinase"/>
</dbReference>
<dbReference type="InterPro" id="IPR015963">
    <property type="entry name" value="Uridylate_kinase_bac"/>
</dbReference>
<dbReference type="NCBIfam" id="TIGR02075">
    <property type="entry name" value="pyrH_bact"/>
    <property type="match status" value="1"/>
</dbReference>
<dbReference type="PANTHER" id="PTHR42833">
    <property type="entry name" value="URIDYLATE KINASE"/>
    <property type="match status" value="1"/>
</dbReference>
<dbReference type="PANTHER" id="PTHR42833:SF4">
    <property type="entry name" value="URIDYLATE KINASE PUMPKIN, CHLOROPLASTIC"/>
    <property type="match status" value="1"/>
</dbReference>
<dbReference type="Pfam" id="PF00696">
    <property type="entry name" value="AA_kinase"/>
    <property type="match status" value="1"/>
</dbReference>
<dbReference type="PIRSF" id="PIRSF005650">
    <property type="entry name" value="Uridylate_kin"/>
    <property type="match status" value="1"/>
</dbReference>
<dbReference type="SUPFAM" id="SSF53633">
    <property type="entry name" value="Carbamate kinase-like"/>
    <property type="match status" value="1"/>
</dbReference>
<evidence type="ECO:0000255" key="1">
    <source>
        <dbReference type="HAMAP-Rule" id="MF_01220"/>
    </source>
</evidence>